<name>QUEC_ECO81</name>
<evidence type="ECO:0000255" key="1">
    <source>
        <dbReference type="HAMAP-Rule" id="MF_01633"/>
    </source>
</evidence>
<comment type="function">
    <text evidence="1">Catalyzes the ATP-dependent conversion of 7-carboxy-7-deazaguanine (CDG) to 7-cyano-7-deazaguanine (preQ(0)).</text>
</comment>
<comment type="catalytic activity">
    <reaction evidence="1">
        <text>7-carboxy-7-deazaguanine + NH4(+) + ATP = 7-cyano-7-deazaguanine + ADP + phosphate + H2O + H(+)</text>
        <dbReference type="Rhea" id="RHEA:27982"/>
        <dbReference type="ChEBI" id="CHEBI:15377"/>
        <dbReference type="ChEBI" id="CHEBI:15378"/>
        <dbReference type="ChEBI" id="CHEBI:28938"/>
        <dbReference type="ChEBI" id="CHEBI:30616"/>
        <dbReference type="ChEBI" id="CHEBI:43474"/>
        <dbReference type="ChEBI" id="CHEBI:45075"/>
        <dbReference type="ChEBI" id="CHEBI:61036"/>
        <dbReference type="ChEBI" id="CHEBI:456216"/>
        <dbReference type="EC" id="6.3.4.20"/>
    </reaction>
</comment>
<comment type="cofactor">
    <cofactor evidence="1">
        <name>Zn(2+)</name>
        <dbReference type="ChEBI" id="CHEBI:29105"/>
    </cofactor>
    <text evidence="1">Binds 1 zinc ion per subunit.</text>
</comment>
<comment type="pathway">
    <text evidence="1">Purine metabolism; 7-cyano-7-deazaguanine biosynthesis.</text>
</comment>
<comment type="similarity">
    <text evidence="1">Belongs to the QueC family.</text>
</comment>
<dbReference type="EC" id="6.3.4.20" evidence="1"/>
<dbReference type="EMBL" id="CU928162">
    <property type="protein sequence ID" value="CAR06678.1"/>
    <property type="molecule type" value="Genomic_DNA"/>
</dbReference>
<dbReference type="RefSeq" id="WP_000817227.1">
    <property type="nucleotide sequence ID" value="NC_011745.1"/>
</dbReference>
<dbReference type="SMR" id="B7MQG0"/>
<dbReference type="GeneID" id="86862989"/>
<dbReference type="KEGG" id="ecq:ECED1_0468"/>
<dbReference type="HOGENOM" id="CLU_081854_0_0_6"/>
<dbReference type="UniPathway" id="UPA00391"/>
<dbReference type="Proteomes" id="UP000000748">
    <property type="component" value="Chromosome"/>
</dbReference>
<dbReference type="GO" id="GO:0005524">
    <property type="term" value="F:ATP binding"/>
    <property type="evidence" value="ECO:0007669"/>
    <property type="project" value="UniProtKB-UniRule"/>
</dbReference>
<dbReference type="GO" id="GO:0016879">
    <property type="term" value="F:ligase activity, forming carbon-nitrogen bonds"/>
    <property type="evidence" value="ECO:0007669"/>
    <property type="project" value="UniProtKB-UniRule"/>
</dbReference>
<dbReference type="GO" id="GO:0008270">
    <property type="term" value="F:zinc ion binding"/>
    <property type="evidence" value="ECO:0007669"/>
    <property type="project" value="UniProtKB-UniRule"/>
</dbReference>
<dbReference type="GO" id="GO:0008616">
    <property type="term" value="P:queuosine biosynthetic process"/>
    <property type="evidence" value="ECO:0007669"/>
    <property type="project" value="UniProtKB-UniRule"/>
</dbReference>
<dbReference type="CDD" id="cd01995">
    <property type="entry name" value="QueC-like"/>
    <property type="match status" value="1"/>
</dbReference>
<dbReference type="FunFam" id="3.40.50.620:FF:000017">
    <property type="entry name" value="7-cyano-7-deazaguanine synthase"/>
    <property type="match status" value="1"/>
</dbReference>
<dbReference type="Gene3D" id="3.40.50.620">
    <property type="entry name" value="HUPs"/>
    <property type="match status" value="1"/>
</dbReference>
<dbReference type="HAMAP" id="MF_01633">
    <property type="entry name" value="QueC"/>
    <property type="match status" value="1"/>
</dbReference>
<dbReference type="InterPro" id="IPR018317">
    <property type="entry name" value="QueC"/>
</dbReference>
<dbReference type="InterPro" id="IPR014729">
    <property type="entry name" value="Rossmann-like_a/b/a_fold"/>
</dbReference>
<dbReference type="NCBIfam" id="TIGR00364">
    <property type="entry name" value="7-cyano-7-deazaguanine synthase QueC"/>
    <property type="match status" value="1"/>
</dbReference>
<dbReference type="NCBIfam" id="NF008317">
    <property type="entry name" value="PRK11106.1"/>
    <property type="match status" value="1"/>
</dbReference>
<dbReference type="PANTHER" id="PTHR42914">
    <property type="entry name" value="7-CYANO-7-DEAZAGUANINE SYNTHASE"/>
    <property type="match status" value="1"/>
</dbReference>
<dbReference type="PANTHER" id="PTHR42914:SF1">
    <property type="entry name" value="7-CYANO-7-DEAZAGUANINE SYNTHASE"/>
    <property type="match status" value="1"/>
</dbReference>
<dbReference type="Pfam" id="PF06508">
    <property type="entry name" value="QueC"/>
    <property type="match status" value="1"/>
</dbReference>
<dbReference type="PIRSF" id="PIRSF006293">
    <property type="entry name" value="ExsB"/>
    <property type="match status" value="1"/>
</dbReference>
<dbReference type="SUPFAM" id="SSF52402">
    <property type="entry name" value="Adenine nucleotide alpha hydrolases-like"/>
    <property type="match status" value="1"/>
</dbReference>
<accession>B7MQG0</accession>
<proteinExistence type="inferred from homology"/>
<protein>
    <recommendedName>
        <fullName evidence="1">7-cyano-7-deazaguanine synthase</fullName>
        <ecNumber evidence="1">6.3.4.20</ecNumber>
    </recommendedName>
    <alternativeName>
        <fullName evidence="1">7-cyano-7-carbaguanine synthase</fullName>
    </alternativeName>
    <alternativeName>
        <fullName evidence="1">PreQ(0) synthase</fullName>
    </alternativeName>
    <alternativeName>
        <fullName evidence="1">Queuosine biosynthesis protein QueC</fullName>
    </alternativeName>
</protein>
<feature type="chain" id="PRO_1000186592" description="7-cyano-7-deazaguanine synthase">
    <location>
        <begin position="1"/>
        <end position="231"/>
    </location>
</feature>
<feature type="binding site" evidence="1">
    <location>
        <begin position="8"/>
        <end position="18"/>
    </location>
    <ligand>
        <name>ATP</name>
        <dbReference type="ChEBI" id="CHEBI:30616"/>
    </ligand>
</feature>
<feature type="binding site" evidence="1">
    <location>
        <position position="188"/>
    </location>
    <ligand>
        <name>Zn(2+)</name>
        <dbReference type="ChEBI" id="CHEBI:29105"/>
    </ligand>
</feature>
<feature type="binding site" evidence="1">
    <location>
        <position position="197"/>
    </location>
    <ligand>
        <name>Zn(2+)</name>
        <dbReference type="ChEBI" id="CHEBI:29105"/>
    </ligand>
</feature>
<feature type="binding site" evidence="1">
    <location>
        <position position="200"/>
    </location>
    <ligand>
        <name>Zn(2+)</name>
        <dbReference type="ChEBI" id="CHEBI:29105"/>
    </ligand>
</feature>
<feature type="binding site" evidence="1">
    <location>
        <position position="203"/>
    </location>
    <ligand>
        <name>Zn(2+)</name>
        <dbReference type="ChEBI" id="CHEBI:29105"/>
    </ligand>
</feature>
<reference key="1">
    <citation type="journal article" date="2009" name="PLoS Genet.">
        <title>Organised genome dynamics in the Escherichia coli species results in highly diverse adaptive paths.</title>
        <authorList>
            <person name="Touchon M."/>
            <person name="Hoede C."/>
            <person name="Tenaillon O."/>
            <person name="Barbe V."/>
            <person name="Baeriswyl S."/>
            <person name="Bidet P."/>
            <person name="Bingen E."/>
            <person name="Bonacorsi S."/>
            <person name="Bouchier C."/>
            <person name="Bouvet O."/>
            <person name="Calteau A."/>
            <person name="Chiapello H."/>
            <person name="Clermont O."/>
            <person name="Cruveiller S."/>
            <person name="Danchin A."/>
            <person name="Diard M."/>
            <person name="Dossat C."/>
            <person name="Karoui M.E."/>
            <person name="Frapy E."/>
            <person name="Garry L."/>
            <person name="Ghigo J.M."/>
            <person name="Gilles A.M."/>
            <person name="Johnson J."/>
            <person name="Le Bouguenec C."/>
            <person name="Lescat M."/>
            <person name="Mangenot S."/>
            <person name="Martinez-Jehanne V."/>
            <person name="Matic I."/>
            <person name="Nassif X."/>
            <person name="Oztas S."/>
            <person name="Petit M.A."/>
            <person name="Pichon C."/>
            <person name="Rouy Z."/>
            <person name="Ruf C.S."/>
            <person name="Schneider D."/>
            <person name="Tourret J."/>
            <person name="Vacherie B."/>
            <person name="Vallenet D."/>
            <person name="Medigue C."/>
            <person name="Rocha E.P.C."/>
            <person name="Denamur E."/>
        </authorList>
    </citation>
    <scope>NUCLEOTIDE SEQUENCE [LARGE SCALE GENOMIC DNA]</scope>
    <source>
        <strain>ED1a</strain>
    </source>
</reference>
<organism>
    <name type="scientific">Escherichia coli O81 (strain ED1a)</name>
    <dbReference type="NCBI Taxonomy" id="585397"/>
    <lineage>
        <taxon>Bacteria</taxon>
        <taxon>Pseudomonadati</taxon>
        <taxon>Pseudomonadota</taxon>
        <taxon>Gammaproteobacteria</taxon>
        <taxon>Enterobacterales</taxon>
        <taxon>Enterobacteriaceae</taxon>
        <taxon>Escherichia</taxon>
    </lineage>
</organism>
<keyword id="KW-0067">ATP-binding</keyword>
<keyword id="KW-0436">Ligase</keyword>
<keyword id="KW-0479">Metal-binding</keyword>
<keyword id="KW-0547">Nucleotide-binding</keyword>
<keyword id="KW-0671">Queuosine biosynthesis</keyword>
<keyword id="KW-0862">Zinc</keyword>
<gene>
    <name evidence="1" type="primary">queC</name>
    <name type="ordered locus">ECED1_0468</name>
</gene>
<sequence length="231" mass="25452">MKRAVVVFSGGQDSTTCLVQALQQYDEVHCVTFDYGQRHRAEIDVARELALKLGARAHKVLDVTLLNELAVSSLTRDSIPVPDYEPEADGIPNTFVPGRNILFLTLAAIYAYQVKAEAVITGVCETDFSGYPDCRDEFVKALNHAVSLGMAKDIRFETPLMWIDKAETWALADYYGKLDLVRNETLTCYNGIKGDGCGHCAACNLRANGLNHYLADKPTVMAAMKQKTGLK</sequence>